<reference key="1">
    <citation type="journal article" date="2009" name="PLoS ONE">
        <title>Complete genome sequence of Francisella tularensis subspecies holarctica FTNF002-00.</title>
        <authorList>
            <person name="Barabote R.D."/>
            <person name="Xie G."/>
            <person name="Brettin T.S."/>
            <person name="Hinrichs S.H."/>
            <person name="Fey P.D."/>
            <person name="Jay J.J."/>
            <person name="Engle J.L."/>
            <person name="Godbole S.D."/>
            <person name="Noronha J.M."/>
            <person name="Scheuermann R.H."/>
            <person name="Zhou L.W."/>
            <person name="Lion C."/>
            <person name="Dempsey M.P."/>
        </authorList>
    </citation>
    <scope>NUCLEOTIDE SEQUENCE [LARGE SCALE GENOMIC DNA]</scope>
    <source>
        <strain>FTNF002-00 / FTA</strain>
    </source>
</reference>
<accession>A7N9I7</accession>
<gene>
    <name evidence="1" type="primary">lolB</name>
    <name type="ordered locus">FTA_0163</name>
</gene>
<protein>
    <recommendedName>
        <fullName evidence="1">Outer-membrane lipoprotein LolB</fullName>
    </recommendedName>
</protein>
<name>LOLB_FRATF</name>
<organism>
    <name type="scientific">Francisella tularensis subsp. holarctica (strain FTNF002-00 / FTA)</name>
    <dbReference type="NCBI Taxonomy" id="458234"/>
    <lineage>
        <taxon>Bacteria</taxon>
        <taxon>Pseudomonadati</taxon>
        <taxon>Pseudomonadota</taxon>
        <taxon>Gammaproteobacteria</taxon>
        <taxon>Thiotrichales</taxon>
        <taxon>Francisellaceae</taxon>
        <taxon>Francisella</taxon>
    </lineage>
</organism>
<keyword id="KW-0998">Cell outer membrane</keyword>
<keyword id="KW-0143">Chaperone</keyword>
<keyword id="KW-0449">Lipoprotein</keyword>
<keyword id="KW-0472">Membrane</keyword>
<keyword id="KW-0564">Palmitate</keyword>
<keyword id="KW-0653">Protein transport</keyword>
<keyword id="KW-0732">Signal</keyword>
<keyword id="KW-0813">Transport</keyword>
<comment type="function">
    <text evidence="1">Plays a critical role in the incorporation of lipoproteins in the outer membrane after they are released by the LolA protein.</text>
</comment>
<comment type="subunit">
    <text evidence="1">Monomer.</text>
</comment>
<comment type="subcellular location">
    <subcellularLocation>
        <location evidence="1">Cell outer membrane</location>
        <topology evidence="1">Lipid-anchor</topology>
    </subcellularLocation>
</comment>
<comment type="similarity">
    <text evidence="1">Belongs to the LolB family.</text>
</comment>
<sequence>MSKLKIDTKRRFSLLIALVLIISLSSCATTQTNVTAITTKTVFNQETTYHNLLKLKKWQANGFIGIIYDNQAESANYTYLQDGDNFSIKLYGPLGIGSIEIKGDTNSVSLANSKGQKLTAKDAKTLMLEQLGWYVPVEGLKYWIKAIAIPNIRQTSELNTNNLLSKLSQNGWSISYSNYQLVDSKYPLPTKIRMSRDNLTLKIVIKSWQI</sequence>
<evidence type="ECO:0000255" key="1">
    <source>
        <dbReference type="HAMAP-Rule" id="MF_00233"/>
    </source>
</evidence>
<dbReference type="EMBL" id="CP000803">
    <property type="protein sequence ID" value="ABU60640.1"/>
    <property type="molecule type" value="Genomic_DNA"/>
</dbReference>
<dbReference type="SMR" id="A7N9I7"/>
<dbReference type="KEGG" id="fta:FTA_0163"/>
<dbReference type="HOGENOM" id="CLU_092816_1_0_6"/>
<dbReference type="GO" id="GO:0009279">
    <property type="term" value="C:cell outer membrane"/>
    <property type="evidence" value="ECO:0007669"/>
    <property type="project" value="UniProtKB-SubCell"/>
</dbReference>
<dbReference type="GO" id="GO:0044874">
    <property type="term" value="P:lipoprotein localization to outer membrane"/>
    <property type="evidence" value="ECO:0007669"/>
    <property type="project" value="UniProtKB-UniRule"/>
</dbReference>
<dbReference type="GO" id="GO:0015031">
    <property type="term" value="P:protein transport"/>
    <property type="evidence" value="ECO:0007669"/>
    <property type="project" value="UniProtKB-KW"/>
</dbReference>
<dbReference type="CDD" id="cd16326">
    <property type="entry name" value="LolB"/>
    <property type="match status" value="1"/>
</dbReference>
<dbReference type="Gene3D" id="2.50.20.10">
    <property type="entry name" value="Lipoprotein localisation LolA/LolB/LppX"/>
    <property type="match status" value="1"/>
</dbReference>
<dbReference type="HAMAP" id="MF_00233">
    <property type="entry name" value="LolB"/>
    <property type="match status" value="1"/>
</dbReference>
<dbReference type="InterPro" id="IPR029046">
    <property type="entry name" value="LolA/LolB/LppX"/>
</dbReference>
<dbReference type="InterPro" id="IPR004565">
    <property type="entry name" value="OM_lipoprot_LolB"/>
</dbReference>
<dbReference type="NCBIfam" id="TIGR00548">
    <property type="entry name" value="lolB"/>
    <property type="match status" value="1"/>
</dbReference>
<dbReference type="Pfam" id="PF03550">
    <property type="entry name" value="LolB"/>
    <property type="match status" value="1"/>
</dbReference>
<dbReference type="SUPFAM" id="SSF89392">
    <property type="entry name" value="Prokaryotic lipoproteins and lipoprotein localization factors"/>
    <property type="match status" value="1"/>
</dbReference>
<dbReference type="PROSITE" id="PS51257">
    <property type="entry name" value="PROKAR_LIPOPROTEIN"/>
    <property type="match status" value="1"/>
</dbReference>
<feature type="signal peptide" evidence="1">
    <location>
        <begin position="1"/>
        <end position="26"/>
    </location>
</feature>
<feature type="chain" id="PRO_1000071791" description="Outer-membrane lipoprotein LolB">
    <location>
        <begin position="27"/>
        <end position="210"/>
    </location>
</feature>
<feature type="lipid moiety-binding region" description="N-palmitoyl cysteine" evidence="1">
    <location>
        <position position="27"/>
    </location>
</feature>
<feature type="lipid moiety-binding region" description="S-diacylglycerol cysteine" evidence="1">
    <location>
        <position position="27"/>
    </location>
</feature>
<proteinExistence type="inferred from homology"/>